<evidence type="ECO:0000255" key="1"/>
<evidence type="ECO:0000255" key="2">
    <source>
        <dbReference type="PROSITE-ProRule" id="PRU00274"/>
    </source>
</evidence>
<evidence type="ECO:0000269" key="3">
    <source>
    </source>
</evidence>
<evidence type="ECO:0000305" key="4"/>
<protein>
    <recommendedName>
        <fullName>Inactive serine protease 39</fullName>
    </recommendedName>
    <alternativeName>
        <fullName>Inactive testicular serine protease 1</fullName>
    </alternativeName>
</protein>
<feature type="signal peptide" evidence="1">
    <location>
        <begin position="1"/>
        <end position="31"/>
    </location>
</feature>
<feature type="chain" id="PRO_0000344981" description="Inactive serine protease 39">
    <location>
        <begin position="32"/>
        <end position="367"/>
    </location>
</feature>
<feature type="domain" description="Peptidase S1" evidence="2">
    <location>
        <begin position="68"/>
        <end position="312"/>
    </location>
</feature>
<feature type="disulfide bond" evidence="2">
    <location>
        <begin position="93"/>
        <end position="109"/>
    </location>
</feature>
<feature type="disulfide bond" evidence="2">
    <location>
        <begin position="192"/>
        <end position="269"/>
    </location>
</feature>
<feature type="disulfide bond" evidence="2">
    <location>
        <begin position="225"/>
        <end position="248"/>
    </location>
</feature>
<feature type="disulfide bond" evidence="2">
    <location>
        <begin position="259"/>
        <end position="287"/>
    </location>
</feature>
<dbReference type="EMBL" id="BC049616">
    <property type="protein sequence ID" value="AAH49616.2"/>
    <property type="molecule type" value="mRNA"/>
</dbReference>
<dbReference type="EMBL" id="BC115665">
    <property type="protein sequence ID" value="AAI15666.1"/>
    <property type="molecule type" value="mRNA"/>
</dbReference>
<dbReference type="EMBL" id="BC115666">
    <property type="protein sequence ID" value="AAI15667.1"/>
    <property type="molecule type" value="mRNA"/>
</dbReference>
<dbReference type="EMBL" id="AB008910">
    <property type="protein sequence ID" value="BAA26132.1"/>
    <property type="molecule type" value="mRNA"/>
</dbReference>
<dbReference type="CCDS" id="CCDS14868.1"/>
<dbReference type="PIR" id="JE0104">
    <property type="entry name" value="JE0104"/>
</dbReference>
<dbReference type="RefSeq" id="NP_033381.1">
    <property type="nucleotide sequence ID" value="NM_009355.3"/>
</dbReference>
<dbReference type="SMR" id="O70169"/>
<dbReference type="FunCoup" id="O70169">
    <property type="interactions" value="95"/>
</dbReference>
<dbReference type="STRING" id="10090.ENSMUSP00000027299"/>
<dbReference type="MEROPS" id="S01.985"/>
<dbReference type="SwissPalm" id="O70169"/>
<dbReference type="PaxDb" id="10090-ENSMUSP00000027299"/>
<dbReference type="ProteomicsDB" id="291676"/>
<dbReference type="DNASU" id="21755"/>
<dbReference type="Ensembl" id="ENSMUST00000027299.10">
    <property type="protein sequence ID" value="ENSMUSP00000027299.4"/>
    <property type="gene ID" value="ENSMUSG00000026125.10"/>
</dbReference>
<dbReference type="GeneID" id="21755"/>
<dbReference type="KEGG" id="mmu:21755"/>
<dbReference type="UCSC" id="uc007aov.1">
    <property type="organism name" value="mouse"/>
</dbReference>
<dbReference type="AGR" id="MGI:1270856"/>
<dbReference type="CTD" id="21755"/>
<dbReference type="MGI" id="MGI:1270856">
    <property type="gene designation" value="Prss39"/>
</dbReference>
<dbReference type="VEuPathDB" id="HostDB:ENSMUSG00000026125"/>
<dbReference type="eggNOG" id="KOG3627">
    <property type="taxonomic scope" value="Eukaryota"/>
</dbReference>
<dbReference type="GeneTree" id="ENSGT00940000157345"/>
<dbReference type="HOGENOM" id="CLU_006842_0_4_1"/>
<dbReference type="InParanoid" id="O70169"/>
<dbReference type="OMA" id="CFQKSHE"/>
<dbReference type="OrthoDB" id="546450at2759"/>
<dbReference type="PhylomeDB" id="O70169"/>
<dbReference type="TreeFam" id="TF351692"/>
<dbReference type="BioGRID-ORCS" id="21755">
    <property type="hits" value="2 hits in 76 CRISPR screens"/>
</dbReference>
<dbReference type="PRO" id="PR:O70169"/>
<dbReference type="Proteomes" id="UP000000589">
    <property type="component" value="Chromosome 1"/>
</dbReference>
<dbReference type="RNAct" id="O70169">
    <property type="molecule type" value="protein"/>
</dbReference>
<dbReference type="Bgee" id="ENSMUSG00000026125">
    <property type="expression patterns" value="Expressed in seminiferous tubule of testis and 7 other cell types or tissues"/>
</dbReference>
<dbReference type="ExpressionAtlas" id="O70169">
    <property type="expression patterns" value="baseline and differential"/>
</dbReference>
<dbReference type="GO" id="GO:0001669">
    <property type="term" value="C:acrosomal vesicle"/>
    <property type="evidence" value="ECO:0007669"/>
    <property type="project" value="UniProtKB-SubCell"/>
</dbReference>
<dbReference type="GO" id="GO:0005576">
    <property type="term" value="C:extracellular region"/>
    <property type="evidence" value="ECO:0007669"/>
    <property type="project" value="UniProtKB-SubCell"/>
</dbReference>
<dbReference type="GO" id="GO:0004252">
    <property type="term" value="F:serine-type endopeptidase activity"/>
    <property type="evidence" value="ECO:0007669"/>
    <property type="project" value="InterPro"/>
</dbReference>
<dbReference type="GO" id="GO:0006508">
    <property type="term" value="P:proteolysis"/>
    <property type="evidence" value="ECO:0007669"/>
    <property type="project" value="InterPro"/>
</dbReference>
<dbReference type="CDD" id="cd00190">
    <property type="entry name" value="Tryp_SPc"/>
    <property type="match status" value="1"/>
</dbReference>
<dbReference type="FunFam" id="2.40.10.10:FF:000039">
    <property type="entry name" value="Brain-specific serine protease 4"/>
    <property type="match status" value="1"/>
</dbReference>
<dbReference type="Gene3D" id="2.40.10.10">
    <property type="entry name" value="Trypsin-like serine proteases"/>
    <property type="match status" value="1"/>
</dbReference>
<dbReference type="InterPro" id="IPR009003">
    <property type="entry name" value="Peptidase_S1_PA"/>
</dbReference>
<dbReference type="InterPro" id="IPR043504">
    <property type="entry name" value="Peptidase_S1_PA_chymotrypsin"/>
</dbReference>
<dbReference type="InterPro" id="IPR001314">
    <property type="entry name" value="Peptidase_S1A"/>
</dbReference>
<dbReference type="InterPro" id="IPR001254">
    <property type="entry name" value="Trypsin_dom"/>
</dbReference>
<dbReference type="InterPro" id="IPR018114">
    <property type="entry name" value="TRYPSIN_HIS"/>
</dbReference>
<dbReference type="InterPro" id="IPR033116">
    <property type="entry name" value="TRYPSIN_SER"/>
</dbReference>
<dbReference type="PANTHER" id="PTHR24253:SF42">
    <property type="entry name" value="PROTEASE, SERINE 47"/>
    <property type="match status" value="1"/>
</dbReference>
<dbReference type="PANTHER" id="PTHR24253">
    <property type="entry name" value="TRANSMEMBRANE PROTEASE SERINE"/>
    <property type="match status" value="1"/>
</dbReference>
<dbReference type="Pfam" id="PF00089">
    <property type="entry name" value="Trypsin"/>
    <property type="match status" value="1"/>
</dbReference>
<dbReference type="PRINTS" id="PR00722">
    <property type="entry name" value="CHYMOTRYPSIN"/>
</dbReference>
<dbReference type="SMART" id="SM00020">
    <property type="entry name" value="Tryp_SPc"/>
    <property type="match status" value="1"/>
</dbReference>
<dbReference type="SUPFAM" id="SSF50494">
    <property type="entry name" value="Trypsin-like serine proteases"/>
    <property type="match status" value="1"/>
</dbReference>
<dbReference type="PROSITE" id="PS50240">
    <property type="entry name" value="TRYPSIN_DOM"/>
    <property type="match status" value="1"/>
</dbReference>
<dbReference type="PROSITE" id="PS00134">
    <property type="entry name" value="TRYPSIN_HIS"/>
    <property type="match status" value="1"/>
</dbReference>
<dbReference type="PROSITE" id="PS00135">
    <property type="entry name" value="TRYPSIN_SER"/>
    <property type="match status" value="1"/>
</dbReference>
<accession>O70169</accession>
<accession>Q80YD5</accession>
<organism>
    <name type="scientific">Mus musculus</name>
    <name type="common">Mouse</name>
    <dbReference type="NCBI Taxonomy" id="10090"/>
    <lineage>
        <taxon>Eukaryota</taxon>
        <taxon>Metazoa</taxon>
        <taxon>Chordata</taxon>
        <taxon>Craniata</taxon>
        <taxon>Vertebrata</taxon>
        <taxon>Euteleostomi</taxon>
        <taxon>Mammalia</taxon>
        <taxon>Eutheria</taxon>
        <taxon>Euarchontoglires</taxon>
        <taxon>Glires</taxon>
        <taxon>Rodentia</taxon>
        <taxon>Myomorpha</taxon>
        <taxon>Muroidea</taxon>
        <taxon>Muridae</taxon>
        <taxon>Murinae</taxon>
        <taxon>Mus</taxon>
        <taxon>Mus</taxon>
    </lineage>
</organism>
<sequence length="367" mass="40766">MWGSRAQQSGPDRGGACLLAAFLLCFSLLHAQDYTPSQTPPPTSNTSLKPRGRVQKELCGKTKFQGKIYGGQIAKAERWPWQASLIFRGRHICGAVLIDKTWLLSAAHCFQRSLTPSDYRILLGYNQLSNPSNYSRQMTVNKVILHEDYSKLSRLEKNIVLIQLHHPVIYSTHIFPACVPDGTTKVSPNNLCWISGWGMLSADKFLQAPFPLLDAEVSLIDEEECTTFFQTPEVSITEYDVIKDDVLCAGDLTNQKSSCRGDSGGPLVCFLNSFWYVVGLANWNGACLEPIHSPNIFTKVSYFSDWIKQKKANTPAADVSSAPLEEMASSLRGWGNYSAGITLKPRISTTLLSSQALLLQSIWLRIL</sequence>
<reference key="1">
    <citation type="journal article" date="1998" name="Biochem. Biophys. Res. Commun.">
        <title>Two novel testicular serine proteases, TESP1 and TESP2, are present in the mouse sperm acrosome.</title>
        <authorList>
            <person name="Kohno N."/>
            <person name="Yamagata K."/>
            <person name="Yamada S."/>
            <person name="Kashiwabara S."/>
            <person name="Sakai Y."/>
            <person name="Baba T."/>
        </authorList>
    </citation>
    <scope>NUCLEOTIDE SEQUENCE [MRNA]</scope>
    <scope>FUNCTION</scope>
    <scope>TISSUE SPECIFICITY</scope>
    <scope>SUBCELLULAR LOCATION</scope>
    <source>
        <tissue>Testis</tissue>
    </source>
</reference>
<reference key="2">
    <citation type="journal article" date="2004" name="Genome Res.">
        <title>The status, quality, and expansion of the NIH full-length cDNA project: the Mammalian Gene Collection (MGC).</title>
        <authorList>
            <consortium name="The MGC Project Team"/>
        </authorList>
    </citation>
    <scope>NUCLEOTIDE SEQUENCE [LARGE SCALE MRNA]</scope>
    <source>
        <tissue>Testis</tissue>
    </source>
</reference>
<gene>
    <name type="primary">Prss39</name>
    <name type="synonym">Tesp1</name>
</gene>
<comment type="function">
    <text evidence="3">May play an important role in the sperm/egg interaction; released during the acrosome reaction.</text>
</comment>
<comment type="subcellular location">
    <subcellularLocation>
        <location evidence="3">Cytoplasmic vesicle</location>
        <location evidence="3">Secretory vesicle</location>
        <location evidence="3">Acrosome</location>
    </subcellularLocation>
    <subcellularLocation>
        <location evidence="3">Secreted</location>
    </subcellularLocation>
</comment>
<comment type="tissue specificity">
    <text evidence="3">Expressed in testis. More specifically, abundantly expressed in the haploid round spermatid.</text>
</comment>
<comment type="miscellaneous">
    <text>There appears to be no human ortholog of this protein.</text>
</comment>
<comment type="similarity">
    <text evidence="2">Belongs to the peptidase S1 family.</text>
</comment>
<comment type="caution">
    <text evidence="4">In contrast to other members of the family, lacks the conserved Asp at position 158, which is replaced by an Asn residue, suggesting it is inactive.</text>
</comment>
<proteinExistence type="evidence at transcript level"/>
<keyword id="KW-0968">Cytoplasmic vesicle</keyword>
<keyword id="KW-1015">Disulfide bond</keyword>
<keyword id="KW-1185">Reference proteome</keyword>
<keyword id="KW-0964">Secreted</keyword>
<keyword id="KW-0732">Signal</keyword>
<name>PRS39_MOUSE</name>